<keyword id="KW-0325">Glycoprotein</keyword>
<keyword id="KW-0333">Golgi apparatus</keyword>
<keyword id="KW-0472">Membrane</keyword>
<keyword id="KW-0489">Methyltransferase</keyword>
<keyword id="KW-1185">Reference proteome</keyword>
<keyword id="KW-0735">Signal-anchor</keyword>
<keyword id="KW-0808">Transferase</keyword>
<keyword id="KW-0812">Transmembrane</keyword>
<keyword id="KW-1133">Transmembrane helix</keyword>
<protein>
    <recommendedName>
        <fullName evidence="5">Probable pectin methyltransferase QUA3</fullName>
        <ecNumber>2.1.1.-</ecNumber>
    </recommendedName>
    <alternativeName>
        <fullName evidence="4">Protein QUASIMODO 3</fullName>
    </alternativeName>
</protein>
<dbReference type="EC" id="2.1.1.-"/>
<dbReference type="EMBL" id="AF128392">
    <property type="protein sequence ID" value="AAD17338.1"/>
    <property type="status" value="ALT_SEQ"/>
    <property type="molecule type" value="Genomic_DNA"/>
</dbReference>
<dbReference type="EMBL" id="AL161472">
    <property type="protein sequence ID" value="CAB80883.1"/>
    <property type="status" value="ALT_SEQ"/>
    <property type="molecule type" value="Genomic_DNA"/>
</dbReference>
<dbReference type="EMBL" id="CP002687">
    <property type="protein sequence ID" value="AEE81928.1"/>
    <property type="molecule type" value="Genomic_DNA"/>
</dbReference>
<dbReference type="EMBL" id="CP002687">
    <property type="protein sequence ID" value="ANM66439.1"/>
    <property type="molecule type" value="Genomic_DNA"/>
</dbReference>
<dbReference type="EMBL" id="AY059835">
    <property type="protein sequence ID" value="AAL24317.1"/>
    <property type="molecule type" value="mRNA"/>
</dbReference>
<dbReference type="EMBL" id="AY059913">
    <property type="protein sequence ID" value="AAL24395.1"/>
    <property type="molecule type" value="mRNA"/>
</dbReference>
<dbReference type="EMBL" id="BT000151">
    <property type="protein sequence ID" value="AAN15470.1"/>
    <property type="molecule type" value="mRNA"/>
</dbReference>
<dbReference type="EMBL" id="BT008377">
    <property type="protein sequence ID" value="AAP37736.1"/>
    <property type="molecule type" value="mRNA"/>
</dbReference>
<dbReference type="EMBL" id="KM397924">
    <property type="protein sequence ID" value="AIU48586.1"/>
    <property type="molecule type" value="mRNA"/>
</dbReference>
<dbReference type="PIR" id="B85010">
    <property type="entry name" value="B85010"/>
</dbReference>
<dbReference type="RefSeq" id="NP_001328335.1">
    <property type="nucleotide sequence ID" value="NM_001340266.1"/>
</dbReference>
<dbReference type="RefSeq" id="NP_567184.1">
    <property type="nucleotide sequence ID" value="NM_116299.3"/>
</dbReference>
<dbReference type="BioGRID" id="13311">
    <property type="interactions" value="3"/>
</dbReference>
<dbReference type="FunCoup" id="Q93W95">
    <property type="interactions" value="2351"/>
</dbReference>
<dbReference type="STRING" id="3702.Q93W95"/>
<dbReference type="GlyCosmos" id="Q93W95">
    <property type="glycosylation" value="1 site, No reported glycans"/>
</dbReference>
<dbReference type="GlyGen" id="Q93W95">
    <property type="glycosylation" value="1 site"/>
</dbReference>
<dbReference type="iPTMnet" id="Q93W95"/>
<dbReference type="SwissPalm" id="Q93W95"/>
<dbReference type="PaxDb" id="3702-AT4G00740.1"/>
<dbReference type="ProteomicsDB" id="234884"/>
<dbReference type="EnsemblPlants" id="AT4G00740.1">
    <property type="protein sequence ID" value="AT4G00740.1"/>
    <property type="gene ID" value="AT4G00740"/>
</dbReference>
<dbReference type="EnsemblPlants" id="AT4G00740.2">
    <property type="protein sequence ID" value="AT4G00740.2"/>
    <property type="gene ID" value="AT4G00740"/>
</dbReference>
<dbReference type="GeneID" id="828020"/>
<dbReference type="Gramene" id="AT4G00740.1">
    <property type="protein sequence ID" value="AT4G00740.1"/>
    <property type="gene ID" value="AT4G00740"/>
</dbReference>
<dbReference type="Gramene" id="AT4G00740.2">
    <property type="protein sequence ID" value="AT4G00740.2"/>
    <property type="gene ID" value="AT4G00740"/>
</dbReference>
<dbReference type="KEGG" id="ath:AT4G00740"/>
<dbReference type="Araport" id="AT4G00740"/>
<dbReference type="TAIR" id="AT4G00740">
    <property type="gene designation" value="QUA3"/>
</dbReference>
<dbReference type="eggNOG" id="ENOG502QU6Q">
    <property type="taxonomic scope" value="Eukaryota"/>
</dbReference>
<dbReference type="HOGENOM" id="CLU_010485_2_2_1"/>
<dbReference type="InParanoid" id="Q93W95"/>
<dbReference type="OMA" id="VATKNFW"/>
<dbReference type="OrthoDB" id="2013972at2759"/>
<dbReference type="PhylomeDB" id="Q93W95"/>
<dbReference type="UniPathway" id="UPA00845"/>
<dbReference type="CD-CODE" id="4299E36E">
    <property type="entry name" value="Nucleolus"/>
</dbReference>
<dbReference type="PRO" id="PR:Q93W95"/>
<dbReference type="Proteomes" id="UP000006548">
    <property type="component" value="Chromosome 4"/>
</dbReference>
<dbReference type="ExpressionAtlas" id="Q93W95">
    <property type="expression patterns" value="baseline and differential"/>
</dbReference>
<dbReference type="GO" id="GO:0005768">
    <property type="term" value="C:endosome"/>
    <property type="evidence" value="ECO:0007005"/>
    <property type="project" value="TAIR"/>
</dbReference>
<dbReference type="GO" id="GO:0005794">
    <property type="term" value="C:Golgi apparatus"/>
    <property type="evidence" value="ECO:0007005"/>
    <property type="project" value="TAIR"/>
</dbReference>
<dbReference type="GO" id="GO:0000139">
    <property type="term" value="C:Golgi membrane"/>
    <property type="evidence" value="ECO:0000314"/>
    <property type="project" value="UniProtKB"/>
</dbReference>
<dbReference type="GO" id="GO:0000138">
    <property type="term" value="C:Golgi trans cisterna"/>
    <property type="evidence" value="ECO:0007005"/>
    <property type="project" value="TAIR"/>
</dbReference>
<dbReference type="GO" id="GO:0016020">
    <property type="term" value="C:membrane"/>
    <property type="evidence" value="ECO:0000314"/>
    <property type="project" value="TAIR"/>
</dbReference>
<dbReference type="GO" id="GO:0005739">
    <property type="term" value="C:mitochondrion"/>
    <property type="evidence" value="ECO:0007005"/>
    <property type="project" value="TAIR"/>
</dbReference>
<dbReference type="GO" id="GO:0005802">
    <property type="term" value="C:trans-Golgi network"/>
    <property type="evidence" value="ECO:0007005"/>
    <property type="project" value="TAIR"/>
</dbReference>
<dbReference type="GO" id="GO:0008757">
    <property type="term" value="F:S-adenosylmethionine-dependent methyltransferase activity"/>
    <property type="evidence" value="ECO:0000314"/>
    <property type="project" value="TAIR"/>
</dbReference>
<dbReference type="GO" id="GO:0042546">
    <property type="term" value="P:cell wall biogenesis"/>
    <property type="evidence" value="ECO:0000315"/>
    <property type="project" value="UniProtKB"/>
</dbReference>
<dbReference type="GO" id="GO:0052546">
    <property type="term" value="P:cell wall pectin metabolic process"/>
    <property type="evidence" value="ECO:0000315"/>
    <property type="project" value="TAIR"/>
</dbReference>
<dbReference type="GO" id="GO:0032259">
    <property type="term" value="P:methylation"/>
    <property type="evidence" value="ECO:0007669"/>
    <property type="project" value="UniProtKB-KW"/>
</dbReference>
<dbReference type="GO" id="GO:0045489">
    <property type="term" value="P:pectin biosynthetic process"/>
    <property type="evidence" value="ECO:0007669"/>
    <property type="project" value="UniProtKB-UniPathway"/>
</dbReference>
<dbReference type="FunFam" id="3.40.50.150:FF:000165">
    <property type="entry name" value="probable methyltransferase PMT13"/>
    <property type="match status" value="1"/>
</dbReference>
<dbReference type="Gene3D" id="3.40.50.150">
    <property type="entry name" value="Vaccinia Virus protein VP39"/>
    <property type="match status" value="1"/>
</dbReference>
<dbReference type="InterPro" id="IPR004159">
    <property type="entry name" value="Put_SAM_MeTrfase"/>
</dbReference>
<dbReference type="InterPro" id="IPR029063">
    <property type="entry name" value="SAM-dependent_MTases_sf"/>
</dbReference>
<dbReference type="PANTHER" id="PTHR10108:SF763">
    <property type="entry name" value="PECTIN METHYLTRANSFERASE QUA3-RELATED"/>
    <property type="match status" value="1"/>
</dbReference>
<dbReference type="PANTHER" id="PTHR10108">
    <property type="entry name" value="SAM-DEPENDENT METHYLTRANSFERASE"/>
    <property type="match status" value="1"/>
</dbReference>
<dbReference type="Pfam" id="PF03141">
    <property type="entry name" value="Methyltransf_29"/>
    <property type="match status" value="1"/>
</dbReference>
<dbReference type="SUPFAM" id="SSF53335">
    <property type="entry name" value="S-adenosyl-L-methionine-dependent methyltransferases"/>
    <property type="match status" value="2"/>
</dbReference>
<reference key="1">
    <citation type="journal article" date="1999" name="Nature">
        <title>Sequence and analysis of chromosome 4 of the plant Arabidopsis thaliana.</title>
        <authorList>
            <person name="Mayer K.F.X."/>
            <person name="Schueller C."/>
            <person name="Wambutt R."/>
            <person name="Murphy G."/>
            <person name="Volckaert G."/>
            <person name="Pohl T."/>
            <person name="Duesterhoeft A."/>
            <person name="Stiekema W."/>
            <person name="Entian K.-D."/>
            <person name="Terryn N."/>
            <person name="Harris B."/>
            <person name="Ansorge W."/>
            <person name="Brandt P."/>
            <person name="Grivell L.A."/>
            <person name="Rieger M."/>
            <person name="Weichselgartner M."/>
            <person name="de Simone V."/>
            <person name="Obermaier B."/>
            <person name="Mache R."/>
            <person name="Mueller M."/>
            <person name="Kreis M."/>
            <person name="Delseny M."/>
            <person name="Puigdomenech P."/>
            <person name="Watson M."/>
            <person name="Schmidtheini T."/>
            <person name="Reichert B."/>
            <person name="Portetelle D."/>
            <person name="Perez-Alonso M."/>
            <person name="Boutry M."/>
            <person name="Bancroft I."/>
            <person name="Vos P."/>
            <person name="Hoheisel J."/>
            <person name="Zimmermann W."/>
            <person name="Wedler H."/>
            <person name="Ridley P."/>
            <person name="Langham S.-A."/>
            <person name="McCullagh B."/>
            <person name="Bilham L."/>
            <person name="Robben J."/>
            <person name="van der Schueren J."/>
            <person name="Grymonprez B."/>
            <person name="Chuang Y.-J."/>
            <person name="Vandenbussche F."/>
            <person name="Braeken M."/>
            <person name="Weltjens I."/>
            <person name="Voet M."/>
            <person name="Bastiaens I."/>
            <person name="Aert R."/>
            <person name="Defoor E."/>
            <person name="Weitzenegger T."/>
            <person name="Bothe G."/>
            <person name="Ramsperger U."/>
            <person name="Hilbert H."/>
            <person name="Braun M."/>
            <person name="Holzer E."/>
            <person name="Brandt A."/>
            <person name="Peters S."/>
            <person name="van Staveren M."/>
            <person name="Dirkse W."/>
            <person name="Mooijman P."/>
            <person name="Klein Lankhorst R."/>
            <person name="Rose M."/>
            <person name="Hauf J."/>
            <person name="Koetter P."/>
            <person name="Berneiser S."/>
            <person name="Hempel S."/>
            <person name="Feldpausch M."/>
            <person name="Lamberth S."/>
            <person name="Van den Daele H."/>
            <person name="De Keyser A."/>
            <person name="Buysshaert C."/>
            <person name="Gielen J."/>
            <person name="Villarroel R."/>
            <person name="De Clercq R."/>
            <person name="van Montagu M."/>
            <person name="Rogers J."/>
            <person name="Cronin A."/>
            <person name="Quail M.A."/>
            <person name="Bray-Allen S."/>
            <person name="Clark L."/>
            <person name="Doggett J."/>
            <person name="Hall S."/>
            <person name="Kay M."/>
            <person name="Lennard N."/>
            <person name="McLay K."/>
            <person name="Mayes R."/>
            <person name="Pettett A."/>
            <person name="Rajandream M.A."/>
            <person name="Lyne M."/>
            <person name="Benes V."/>
            <person name="Rechmann S."/>
            <person name="Borkova D."/>
            <person name="Bloecker H."/>
            <person name="Scharfe M."/>
            <person name="Grimm M."/>
            <person name="Loehnert T.-H."/>
            <person name="Dose S."/>
            <person name="de Haan M."/>
            <person name="Maarse A.C."/>
            <person name="Schaefer M."/>
            <person name="Mueller-Auer S."/>
            <person name="Gabel C."/>
            <person name="Fuchs M."/>
            <person name="Fartmann B."/>
            <person name="Granderath K."/>
            <person name="Dauner D."/>
            <person name="Herzl A."/>
            <person name="Neumann S."/>
            <person name="Argiriou A."/>
            <person name="Vitale D."/>
            <person name="Liguori R."/>
            <person name="Piravandi E."/>
            <person name="Massenet O."/>
            <person name="Quigley F."/>
            <person name="Clabauld G."/>
            <person name="Muendlein A."/>
            <person name="Felber R."/>
            <person name="Schnabl S."/>
            <person name="Hiller R."/>
            <person name="Schmidt W."/>
            <person name="Lecharny A."/>
            <person name="Aubourg S."/>
            <person name="Chefdor F."/>
            <person name="Cooke R."/>
            <person name="Berger C."/>
            <person name="Monfort A."/>
            <person name="Casacuberta E."/>
            <person name="Gibbons T."/>
            <person name="Weber N."/>
            <person name="Vandenbol M."/>
            <person name="Bargues M."/>
            <person name="Terol J."/>
            <person name="Torres A."/>
            <person name="Perez-Perez A."/>
            <person name="Purnelle B."/>
            <person name="Bent E."/>
            <person name="Johnson S."/>
            <person name="Tacon D."/>
            <person name="Jesse T."/>
            <person name="Heijnen L."/>
            <person name="Schwarz S."/>
            <person name="Scholler P."/>
            <person name="Heber S."/>
            <person name="Francs P."/>
            <person name="Bielke C."/>
            <person name="Frishman D."/>
            <person name="Haase D."/>
            <person name="Lemcke K."/>
            <person name="Mewes H.-W."/>
            <person name="Stocker S."/>
            <person name="Zaccaria P."/>
            <person name="Bevan M."/>
            <person name="Wilson R.K."/>
            <person name="de la Bastide M."/>
            <person name="Habermann K."/>
            <person name="Parnell L."/>
            <person name="Dedhia N."/>
            <person name="Gnoj L."/>
            <person name="Schutz K."/>
            <person name="Huang E."/>
            <person name="Spiegel L."/>
            <person name="Sekhon M."/>
            <person name="Murray J."/>
            <person name="Sheet P."/>
            <person name="Cordes M."/>
            <person name="Abu-Threideh J."/>
            <person name="Stoneking T."/>
            <person name="Kalicki J."/>
            <person name="Graves T."/>
            <person name="Harmon G."/>
            <person name="Edwards J."/>
            <person name="Latreille P."/>
            <person name="Courtney L."/>
            <person name="Cloud J."/>
            <person name="Abbott A."/>
            <person name="Scott K."/>
            <person name="Johnson D."/>
            <person name="Minx P."/>
            <person name="Bentley D."/>
            <person name="Fulton B."/>
            <person name="Miller N."/>
            <person name="Greco T."/>
            <person name="Kemp K."/>
            <person name="Kramer J."/>
            <person name="Fulton L."/>
            <person name="Mardis E."/>
            <person name="Dante M."/>
            <person name="Pepin K."/>
            <person name="Hillier L.W."/>
            <person name="Nelson J."/>
            <person name="Spieth J."/>
            <person name="Ryan E."/>
            <person name="Andrews S."/>
            <person name="Geisel C."/>
            <person name="Layman D."/>
            <person name="Du H."/>
            <person name="Ali J."/>
            <person name="Berghoff A."/>
            <person name="Jones K."/>
            <person name="Drone K."/>
            <person name="Cotton M."/>
            <person name="Joshu C."/>
            <person name="Antonoiu B."/>
            <person name="Zidanic M."/>
            <person name="Strong C."/>
            <person name="Sun H."/>
            <person name="Lamar B."/>
            <person name="Yordan C."/>
            <person name="Ma P."/>
            <person name="Zhong J."/>
            <person name="Preston R."/>
            <person name="Vil D."/>
            <person name="Shekher M."/>
            <person name="Matero A."/>
            <person name="Shah R."/>
            <person name="Swaby I.K."/>
            <person name="O'Shaughnessy A."/>
            <person name="Rodriguez M."/>
            <person name="Hoffman J."/>
            <person name="Till S."/>
            <person name="Granat S."/>
            <person name="Shohdy N."/>
            <person name="Hasegawa A."/>
            <person name="Hameed A."/>
            <person name="Lodhi M."/>
            <person name="Johnson A."/>
            <person name="Chen E."/>
            <person name="Marra M.A."/>
            <person name="Martienssen R."/>
            <person name="McCombie W.R."/>
        </authorList>
    </citation>
    <scope>NUCLEOTIDE SEQUENCE [LARGE SCALE GENOMIC DNA]</scope>
    <source>
        <strain>cv. Columbia</strain>
    </source>
</reference>
<reference key="2">
    <citation type="journal article" date="2017" name="Plant J.">
        <title>Araport11: a complete reannotation of the Arabidopsis thaliana reference genome.</title>
        <authorList>
            <person name="Cheng C.Y."/>
            <person name="Krishnakumar V."/>
            <person name="Chan A.P."/>
            <person name="Thibaud-Nissen F."/>
            <person name="Schobel S."/>
            <person name="Town C.D."/>
        </authorList>
    </citation>
    <scope>GENOME REANNOTATION</scope>
    <source>
        <strain>cv. Columbia</strain>
    </source>
</reference>
<reference key="3">
    <citation type="journal article" date="2003" name="Science">
        <title>Empirical analysis of transcriptional activity in the Arabidopsis genome.</title>
        <authorList>
            <person name="Yamada K."/>
            <person name="Lim J."/>
            <person name="Dale J.M."/>
            <person name="Chen H."/>
            <person name="Shinn P."/>
            <person name="Palm C.J."/>
            <person name="Southwick A.M."/>
            <person name="Wu H.C."/>
            <person name="Kim C.J."/>
            <person name="Nguyen M."/>
            <person name="Pham P.K."/>
            <person name="Cheuk R.F."/>
            <person name="Karlin-Newmann G."/>
            <person name="Liu S.X."/>
            <person name="Lam B."/>
            <person name="Sakano H."/>
            <person name="Wu T."/>
            <person name="Yu G."/>
            <person name="Miranda M."/>
            <person name="Quach H.L."/>
            <person name="Tripp M."/>
            <person name="Chang C.H."/>
            <person name="Lee J.M."/>
            <person name="Toriumi M.J."/>
            <person name="Chan M.M."/>
            <person name="Tang C.C."/>
            <person name="Onodera C.S."/>
            <person name="Deng J.M."/>
            <person name="Akiyama K."/>
            <person name="Ansari Y."/>
            <person name="Arakawa T."/>
            <person name="Banh J."/>
            <person name="Banno F."/>
            <person name="Bowser L."/>
            <person name="Brooks S.Y."/>
            <person name="Carninci P."/>
            <person name="Chao Q."/>
            <person name="Choy N."/>
            <person name="Enju A."/>
            <person name="Goldsmith A.D."/>
            <person name="Gurjal M."/>
            <person name="Hansen N.F."/>
            <person name="Hayashizaki Y."/>
            <person name="Johnson-Hopson C."/>
            <person name="Hsuan V.W."/>
            <person name="Iida K."/>
            <person name="Karnes M."/>
            <person name="Khan S."/>
            <person name="Koesema E."/>
            <person name="Ishida J."/>
            <person name="Jiang P.X."/>
            <person name="Jones T."/>
            <person name="Kawai J."/>
            <person name="Kamiya A."/>
            <person name="Meyers C."/>
            <person name="Nakajima M."/>
            <person name="Narusaka M."/>
            <person name="Seki M."/>
            <person name="Sakurai T."/>
            <person name="Satou M."/>
            <person name="Tamse R."/>
            <person name="Vaysberg M."/>
            <person name="Wallender E.K."/>
            <person name="Wong C."/>
            <person name="Yamamura Y."/>
            <person name="Yuan S."/>
            <person name="Shinozaki K."/>
            <person name="Davis R.W."/>
            <person name="Theologis A."/>
            <person name="Ecker J.R."/>
        </authorList>
    </citation>
    <scope>NUCLEOTIDE SEQUENCE [LARGE SCALE MRNA]</scope>
    <source>
        <strain>cv. Columbia</strain>
    </source>
</reference>
<reference key="4">
    <citation type="journal article" date="2014" name="Nat. Commun.">
        <title>Resolution of deep angiosperm phylogeny using conserved nuclear genes and estimates of early divergence times.</title>
        <authorList>
            <person name="Zeng L."/>
            <person name="Zhang Q."/>
            <person name="Sun R."/>
            <person name="Kong H."/>
            <person name="Zhang N."/>
            <person name="Ma H."/>
        </authorList>
    </citation>
    <scope>NUCLEOTIDE SEQUENCE OF 84-588</scope>
</reference>
<reference key="5">
    <citation type="journal article" date="2007" name="Plant J.">
        <title>The TUMOROUS SHOOT DEVELOPMENT2 gene of Arabidopsis encoding a putative methyltransferase is required for cell adhesion and co-ordinated plant development.</title>
        <authorList>
            <person name="Krupkova E."/>
            <person name="Immerzeel P."/>
            <person name="Pauly M."/>
            <person name="Schmulling T."/>
        </authorList>
    </citation>
    <scope>GENE FAMILY</scope>
</reference>
<reference key="6">
    <citation type="journal article" date="2011" name="J. Exp. Bot.">
        <title>QUASIMODO 3 (QUA3) is a putative homogalacturonan methyltransferase regulating cell wall biosynthesis in Arabidopsis suspension-cultured cells.</title>
        <authorList>
            <person name="Miao Y."/>
            <person name="Li H.-Y."/>
            <person name="Shen J."/>
            <person name="Wang J."/>
            <person name="Jiang L."/>
        </authorList>
    </citation>
    <scope>FUNCTION</scope>
    <scope>DISRUPTION PHENOTYPE</scope>
    <scope>SUBCELLULAR LOCATION</scope>
    <scope>TISSUE SPECIFICITY</scope>
    <scope>PATHWAY</scope>
    <source>
        <strain>cv. No-0</strain>
    </source>
</reference>
<evidence type="ECO:0000255" key="1"/>
<evidence type="ECO:0000255" key="2">
    <source>
        <dbReference type="PROSITE-ProRule" id="PRU00498"/>
    </source>
</evidence>
<evidence type="ECO:0000269" key="3">
    <source>
    </source>
</evidence>
<evidence type="ECO:0000303" key="4">
    <source>
    </source>
</evidence>
<evidence type="ECO:0000305" key="5"/>
<evidence type="ECO:0000305" key="6">
    <source>
    </source>
</evidence>
<evidence type="ECO:0000312" key="7">
    <source>
        <dbReference type="Araport" id="AT4G00740"/>
    </source>
</evidence>
<evidence type="ECO:0000312" key="8">
    <source>
        <dbReference type="EMBL" id="AAD17338.1"/>
    </source>
</evidence>
<sequence length="600" mass="67555">MGHVNLPASKRGNPRQWRLLDIVTAAFFGIVLLFFILLFTPLGDSMAASGRQTLLLSTASDPRQRQRLVTLVEAGQHLQPIEYCPAEAVAHMPCEDPRRNSQLSREMNFYRERHCPLPEETPLCLIPPPSGYKIPVPWPESLHKIWHANMPYNKIADRKGHQGWMKREGEYFTFPGGGTMFPGGAGQYIEKLAQYIPLNGGTLRTALDMGCGVASFGGTLLSQGILALSFAPRDSHKSQIQFALERGVPAFVAMLGTRRLPFPAYSFDLMHCSRCLIPFTAYNATYFIEVDRLLRPGGYLVISGPPVQWPKQDKEWADLQAVARALCYELIAVDGNTVIWKKPVGDSCLPSQNEFGLELCDESVPPSDAWYFKLKRCVTRPSSVKGEHALGTISKWPERLTKVPSRAIVMKNGLDVFEADARRWARRVAYYRDSLNLKLKSPTVRNVMDMNAFFGGFAATLASDPVWVMNVIPARKPLTLDVIYDRGLIGVYHDWCEPFSTYPRTYDFIHVSGIESLIKRQDSSKSRCSLVDLMVEMDRILRPEGKVVIRDSPEVLDKVARMAHAVRWSSSIHEKEPESHGREKILIATKSLWKLPSNSH</sequence>
<gene>
    <name evidence="4" type="primary">QUA3</name>
    <name evidence="5" type="synonym">PMT13</name>
    <name evidence="7" type="ordered locus">At4g00740</name>
    <name evidence="8" type="ORF">F15P23.2</name>
</gene>
<organism>
    <name type="scientific">Arabidopsis thaliana</name>
    <name type="common">Mouse-ear cress</name>
    <dbReference type="NCBI Taxonomy" id="3702"/>
    <lineage>
        <taxon>Eukaryota</taxon>
        <taxon>Viridiplantae</taxon>
        <taxon>Streptophyta</taxon>
        <taxon>Embryophyta</taxon>
        <taxon>Tracheophyta</taxon>
        <taxon>Spermatophyta</taxon>
        <taxon>Magnoliopsida</taxon>
        <taxon>eudicotyledons</taxon>
        <taxon>Gunneridae</taxon>
        <taxon>Pentapetalae</taxon>
        <taxon>rosids</taxon>
        <taxon>malvids</taxon>
        <taxon>Brassicales</taxon>
        <taxon>Brassicaceae</taxon>
        <taxon>Camelineae</taxon>
        <taxon>Arabidopsis</taxon>
    </lineage>
</organism>
<feature type="chain" id="PRO_0000393253" description="Probable pectin methyltransferase QUA3">
    <location>
        <begin position="1"/>
        <end position="600"/>
    </location>
</feature>
<feature type="topological domain" description="Cytoplasmic" evidence="5">
    <location>
        <begin position="1"/>
        <end position="18"/>
    </location>
</feature>
<feature type="transmembrane region" description="Helical; Signal-anchor for type II membrane protein" evidence="1">
    <location>
        <begin position="19"/>
        <end position="39"/>
    </location>
</feature>
<feature type="topological domain" description="Lumenal" evidence="5">
    <location>
        <begin position="40"/>
        <end position="600"/>
    </location>
</feature>
<feature type="glycosylation site" description="N-linked (GlcNAc...) asparagine" evidence="2">
    <location>
        <position position="283"/>
    </location>
</feature>
<feature type="sequence conflict" description="In Ref. 4; AIU48586." evidence="5" ref="4">
    <location>
        <position position="382"/>
    </location>
</feature>
<feature type="sequence conflict" description="In Ref. 4; AIU48586." evidence="5" ref="4">
    <original>LIKRQ</original>
    <variation>IKR</variation>
    <location>
        <begin position="517"/>
        <end position="521"/>
    </location>
</feature>
<comment type="function">
    <text evidence="3">S-adenosyl-L-methionine (SAM)-dependent methyltransferase (MTase) which mediates the methylesterification of the pectin homogalacturonan (HG) and thus regulates cell wall biosynthesis, at least in suspension-cultured cells.</text>
</comment>
<comment type="pathway">
    <text evidence="6">Glycan metabolism; pectin biosynthesis.</text>
</comment>
<comment type="subcellular location">
    <subcellularLocation>
        <location evidence="3">Golgi apparatus membrane</location>
        <topology evidence="3">Single-pass type II membrane protein</topology>
    </subcellularLocation>
</comment>
<comment type="tissue specificity">
    <text evidence="3">Highly expressed and abundant in suspension-cultured cells, but low levels in seedlings.</text>
</comment>
<comment type="disruption phenotype">
    <text evidence="3">In seedlings, no altered phenotypes or changes in pectin methylation (PubMed:21725030). In contrast, suspension-cultured cells exhibit less pectin methylation as well as altered composition and assembly of cell wall polysaccharides (PubMed:21725030).</text>
</comment>
<comment type="similarity">
    <text evidence="5">Belongs to the methyltransferase superfamily.</text>
</comment>
<comment type="sequence caution" evidence="5">
    <conflict type="erroneous gene model prediction">
        <sequence resource="EMBL-CDS" id="AAD17338"/>
    </conflict>
</comment>
<comment type="sequence caution" evidence="5">
    <conflict type="erroneous gene model prediction">
        <sequence resource="EMBL-CDS" id="CAB80883"/>
    </conflict>
</comment>
<proteinExistence type="evidence at transcript level"/>
<accession>Q93W95</accession>
<accession>A0A097PKM4</accession>
<accession>Q9ZPI0</accession>
<name>PMTD_ARATH</name>